<name>PETG_TRIEI</name>
<sequence>MVEPLLSGVVLGLILVTLSGLFFAAYQQYKRGNQLNG</sequence>
<protein>
    <recommendedName>
        <fullName evidence="1">Cytochrome b6-f complex subunit 5</fullName>
    </recommendedName>
    <alternativeName>
        <fullName evidence="1">Cytochrome b6-f complex subunit PetG</fullName>
    </alternativeName>
    <alternativeName>
        <fullName evidence="1">Cytochrome b6-f complex subunit V</fullName>
    </alternativeName>
</protein>
<organism>
    <name type="scientific">Trichodesmium erythraeum (strain IMS101)</name>
    <dbReference type="NCBI Taxonomy" id="203124"/>
    <lineage>
        <taxon>Bacteria</taxon>
        <taxon>Bacillati</taxon>
        <taxon>Cyanobacteriota</taxon>
        <taxon>Cyanophyceae</taxon>
        <taxon>Oscillatoriophycideae</taxon>
        <taxon>Oscillatoriales</taxon>
        <taxon>Microcoleaceae</taxon>
        <taxon>Trichodesmium</taxon>
    </lineage>
</organism>
<comment type="function">
    <text evidence="1">Component of the cytochrome b6-f complex, which mediates electron transfer between photosystem II (PSII) and photosystem I (PSI), cyclic electron flow around PSI, and state transitions. PetG is required for either the stability or assembly of the cytochrome b6-f complex.</text>
</comment>
<comment type="subunit">
    <text evidence="1">The 4 large subunits of the cytochrome b6-f complex are cytochrome b6, subunit IV (17 kDa polypeptide, PetD), cytochrome f and the Rieske protein, while the 4 small subunits are PetG, PetL, PetM and PetN. The complex functions as a dimer.</text>
</comment>
<comment type="subcellular location">
    <subcellularLocation>
        <location evidence="1">Cellular thylakoid membrane</location>
        <topology evidence="1">Single-pass membrane protein</topology>
    </subcellularLocation>
</comment>
<comment type="similarity">
    <text evidence="1">Belongs to the PetG family.</text>
</comment>
<accession>Q113E9</accession>
<reference key="1">
    <citation type="journal article" date="2015" name="Proc. Natl. Acad. Sci. U.S.A.">
        <title>Trichodesmium genome maintains abundant, widespread noncoding DNA in situ, despite oligotrophic lifestyle.</title>
        <authorList>
            <person name="Walworth N."/>
            <person name="Pfreundt U."/>
            <person name="Nelson W.C."/>
            <person name="Mincer T."/>
            <person name="Heidelberg J.F."/>
            <person name="Fu F."/>
            <person name="Waterbury J.B."/>
            <person name="Glavina del Rio T."/>
            <person name="Goodwin L."/>
            <person name="Kyrpides N.C."/>
            <person name="Land M.L."/>
            <person name="Woyke T."/>
            <person name="Hutchins D.A."/>
            <person name="Hess W.R."/>
            <person name="Webb E.A."/>
        </authorList>
    </citation>
    <scope>NUCLEOTIDE SEQUENCE [LARGE SCALE GENOMIC DNA]</scope>
    <source>
        <strain>IMS101</strain>
    </source>
</reference>
<keyword id="KW-0249">Electron transport</keyword>
<keyword id="KW-0472">Membrane</keyword>
<keyword id="KW-0602">Photosynthesis</keyword>
<keyword id="KW-0793">Thylakoid</keyword>
<keyword id="KW-0812">Transmembrane</keyword>
<keyword id="KW-1133">Transmembrane helix</keyword>
<keyword id="KW-0813">Transport</keyword>
<proteinExistence type="inferred from homology"/>
<evidence type="ECO:0000255" key="1">
    <source>
        <dbReference type="HAMAP-Rule" id="MF_00432"/>
    </source>
</evidence>
<gene>
    <name evidence="1" type="primary">petG</name>
    <name type="ordered locus">Tery_2141</name>
</gene>
<dbReference type="EMBL" id="CP000393">
    <property type="protein sequence ID" value="ABG51375.1"/>
    <property type="molecule type" value="Genomic_DNA"/>
</dbReference>
<dbReference type="RefSeq" id="WP_011611745.1">
    <property type="nucleotide sequence ID" value="NC_008312.1"/>
</dbReference>
<dbReference type="SMR" id="Q113E9"/>
<dbReference type="STRING" id="203124.Tery_2141"/>
<dbReference type="KEGG" id="ter:Tery_2141"/>
<dbReference type="eggNOG" id="ENOG5033BE9">
    <property type="taxonomic scope" value="Bacteria"/>
</dbReference>
<dbReference type="HOGENOM" id="CLU_216962_0_0_3"/>
<dbReference type="GO" id="GO:0009512">
    <property type="term" value="C:cytochrome b6f complex"/>
    <property type="evidence" value="ECO:0007669"/>
    <property type="project" value="InterPro"/>
</dbReference>
<dbReference type="GO" id="GO:0031676">
    <property type="term" value="C:plasma membrane-derived thylakoid membrane"/>
    <property type="evidence" value="ECO:0007669"/>
    <property type="project" value="UniProtKB-SubCell"/>
</dbReference>
<dbReference type="GO" id="GO:0045158">
    <property type="term" value="F:electron transporter, transferring electrons within cytochrome b6/f complex of photosystem II activity"/>
    <property type="evidence" value="ECO:0007669"/>
    <property type="project" value="UniProtKB-UniRule"/>
</dbReference>
<dbReference type="GO" id="GO:0017004">
    <property type="term" value="P:cytochrome complex assembly"/>
    <property type="evidence" value="ECO:0007669"/>
    <property type="project" value="UniProtKB-UniRule"/>
</dbReference>
<dbReference type="GO" id="GO:0015979">
    <property type="term" value="P:photosynthesis"/>
    <property type="evidence" value="ECO:0007669"/>
    <property type="project" value="UniProtKB-KW"/>
</dbReference>
<dbReference type="HAMAP" id="MF_00432">
    <property type="entry name" value="Cytb6_f_PetG"/>
    <property type="match status" value="1"/>
</dbReference>
<dbReference type="InterPro" id="IPR003683">
    <property type="entry name" value="Cyt_6/f_cplx_su5"/>
</dbReference>
<dbReference type="InterPro" id="IPR036099">
    <property type="entry name" value="Cyt_6/f_cplx_su5_sf"/>
</dbReference>
<dbReference type="NCBIfam" id="NF001907">
    <property type="entry name" value="PRK00665.1"/>
    <property type="match status" value="1"/>
</dbReference>
<dbReference type="Pfam" id="PF02529">
    <property type="entry name" value="PetG"/>
    <property type="match status" value="1"/>
</dbReference>
<dbReference type="PIRSF" id="PIRSF000034">
    <property type="entry name" value="Cyt_b6-f_V"/>
    <property type="match status" value="1"/>
</dbReference>
<dbReference type="SUPFAM" id="SSF103446">
    <property type="entry name" value="PetG subunit of the cytochrome b6f complex"/>
    <property type="match status" value="1"/>
</dbReference>
<feature type="chain" id="PRO_1000050401" description="Cytochrome b6-f complex subunit 5">
    <location>
        <begin position="1"/>
        <end position="37"/>
    </location>
</feature>
<feature type="transmembrane region" description="Helical" evidence="1">
    <location>
        <begin position="5"/>
        <end position="25"/>
    </location>
</feature>